<accession>Q5HRL0</accession>
<gene>
    <name evidence="1" type="primary">rpoB</name>
    <name type="ordered locus">SERP0183</name>
</gene>
<keyword id="KW-0240">DNA-directed RNA polymerase</keyword>
<keyword id="KW-0548">Nucleotidyltransferase</keyword>
<keyword id="KW-1185">Reference proteome</keyword>
<keyword id="KW-0804">Transcription</keyword>
<keyword id="KW-0808">Transferase</keyword>
<evidence type="ECO:0000255" key="1">
    <source>
        <dbReference type="HAMAP-Rule" id="MF_01321"/>
    </source>
</evidence>
<evidence type="ECO:0000256" key="2">
    <source>
        <dbReference type="SAM" id="MobiDB-lite"/>
    </source>
</evidence>
<sequence>MAGQVVQYGRHRKRRNYARISEVLELPNLIEIQTKSYDWFLKEGLLEMFRDISPIEDFTGNLSLEFVDYRLGEPKYDLEESKNRDATYAAPLRVKVRLIIKETGEVKEQEVFMGDFPLMTDTGTFVINGAERVIVSQLVRSPSVYFNEKIDKNGRENYDATIIPNRGAWLEYETDAKDVVYVRIDRTRKLPLTVLLRALGFSTDQEIVDLLGDSEYLRNTLEKDGTENTEQALLEIYERLRPGEPPTVENAKSLLYSRFFDPKRYDLASVGRYKANKKLHLKHRLFNQKLAEPIVNSETGEIVVDEGTVLDRRKLDEIMDVLETNANSEVFELEGSVIDEPVEIQSIKVYVPNDEEGRTTTVIGNALPDSEVKCITPADIVASMSYFFNLLNGIGYTDDIDHLGNRRLRSVGELLQNQFRIGLSRMERVVRERMSIQDTDSITPQQLINIRPVIASIKEFFGSSQLSQFMDQANPLAELTHKRRLSALGPGGLTRERAQMEVRDVHYSHYGRMCPIETPEGPNIGLINSLSSYARVNEFGFIETPYRKVDLDTNSITDQIDYLTADEEDSYVVAQANSRLDENGRFLDDEVVCRFRGNNTVMAKEKMDYMDVSPKQVVSAATACIPFLENDDSNRALMGANMQRQAVPLMNPEAPFVGTGMEHVAARDSGAAITAKHRGRVEHVESNEILVRRLVEENGTEHEGELDRYPLAKFKRSNSGTCYNQRPIVSIGDVVEYNEILADGPSMELGEMALGRNVVVGFMTWDGYNYEDAVIMSERLVKDDVYTSIHIEEYESEARDTKLGPEEITRDIPNVSESALKNLDDRGIVYVGAEVKDGDILVGKVTPKGVTELTAEERLLHAIFGEKAREVRDTSLRVPHGAGGIVLDVKVFNREEGDDTLSPGVNQLVRVYIVQKRKIHVGDKMCGRHGNKGVISKIVPEEDMPYLPDGRPIDIMLNPLGVPSRMNIGQVLELHLGMAAKNLGIHVASPVFDGANDDDVWSTIEEAGMARDGKTVLYDGRTGEPFDNRISVGVMYMLKLAHMVDDKLHARSTGPYSLVTQQPLGGKAQFGGQRFGEMEVWALEAYGAAYTLQEILTYKSDDTVGRVKTYESIVKGENISRPSVPESFRVLMKELQSLGLDVKVMDEHDNEIEMADVDDEDAAERKVDLQQKSAPESQKETTD</sequence>
<dbReference type="EC" id="2.7.7.6" evidence="1"/>
<dbReference type="EMBL" id="CP000029">
    <property type="protein sequence ID" value="AAW53580.1"/>
    <property type="molecule type" value="Genomic_DNA"/>
</dbReference>
<dbReference type="RefSeq" id="WP_001833083.1">
    <property type="nucleotide sequence ID" value="NC_002976.3"/>
</dbReference>
<dbReference type="SMR" id="Q5HRL0"/>
<dbReference type="STRING" id="176279.SERP0183"/>
<dbReference type="GeneID" id="50019529"/>
<dbReference type="KEGG" id="ser:SERP0183"/>
<dbReference type="eggNOG" id="COG0085">
    <property type="taxonomic scope" value="Bacteria"/>
</dbReference>
<dbReference type="HOGENOM" id="CLU_000524_4_1_9"/>
<dbReference type="Proteomes" id="UP000000531">
    <property type="component" value="Chromosome"/>
</dbReference>
<dbReference type="GO" id="GO:0000428">
    <property type="term" value="C:DNA-directed RNA polymerase complex"/>
    <property type="evidence" value="ECO:0007669"/>
    <property type="project" value="UniProtKB-KW"/>
</dbReference>
<dbReference type="GO" id="GO:0003677">
    <property type="term" value="F:DNA binding"/>
    <property type="evidence" value="ECO:0007669"/>
    <property type="project" value="UniProtKB-UniRule"/>
</dbReference>
<dbReference type="GO" id="GO:0003899">
    <property type="term" value="F:DNA-directed RNA polymerase activity"/>
    <property type="evidence" value="ECO:0007669"/>
    <property type="project" value="UniProtKB-UniRule"/>
</dbReference>
<dbReference type="GO" id="GO:0032549">
    <property type="term" value="F:ribonucleoside binding"/>
    <property type="evidence" value="ECO:0007669"/>
    <property type="project" value="InterPro"/>
</dbReference>
<dbReference type="GO" id="GO:0006351">
    <property type="term" value="P:DNA-templated transcription"/>
    <property type="evidence" value="ECO:0007669"/>
    <property type="project" value="UniProtKB-UniRule"/>
</dbReference>
<dbReference type="CDD" id="cd00653">
    <property type="entry name" value="RNA_pol_B_RPB2"/>
    <property type="match status" value="1"/>
</dbReference>
<dbReference type="FunFam" id="3.90.1800.10:FF:000001">
    <property type="entry name" value="DNA-directed RNA polymerase subunit beta"/>
    <property type="match status" value="1"/>
</dbReference>
<dbReference type="Gene3D" id="2.40.50.100">
    <property type="match status" value="1"/>
</dbReference>
<dbReference type="Gene3D" id="2.40.50.150">
    <property type="match status" value="1"/>
</dbReference>
<dbReference type="Gene3D" id="3.90.1100.10">
    <property type="match status" value="3"/>
</dbReference>
<dbReference type="Gene3D" id="2.40.270.10">
    <property type="entry name" value="DNA-directed RNA polymerase, subunit 2, domain 6"/>
    <property type="match status" value="1"/>
</dbReference>
<dbReference type="Gene3D" id="3.90.1800.10">
    <property type="entry name" value="RNA polymerase alpha subunit dimerisation domain"/>
    <property type="match status" value="1"/>
</dbReference>
<dbReference type="Gene3D" id="3.90.1110.10">
    <property type="entry name" value="RNA polymerase Rpb2, domain 2"/>
    <property type="match status" value="1"/>
</dbReference>
<dbReference type="HAMAP" id="MF_01321">
    <property type="entry name" value="RNApol_bact_RpoB"/>
    <property type="match status" value="1"/>
</dbReference>
<dbReference type="InterPro" id="IPR019462">
    <property type="entry name" value="DNA-dir_RNA_pol_bsu_external_1"/>
</dbReference>
<dbReference type="InterPro" id="IPR015712">
    <property type="entry name" value="DNA-dir_RNA_pol_su2"/>
</dbReference>
<dbReference type="InterPro" id="IPR007120">
    <property type="entry name" value="DNA-dir_RNAP_su2_dom"/>
</dbReference>
<dbReference type="InterPro" id="IPR037033">
    <property type="entry name" value="DNA-dir_RNAP_su2_hyb_sf"/>
</dbReference>
<dbReference type="InterPro" id="IPR010243">
    <property type="entry name" value="RNA_pol_bsu_bac"/>
</dbReference>
<dbReference type="InterPro" id="IPR007121">
    <property type="entry name" value="RNA_pol_bsu_CS"/>
</dbReference>
<dbReference type="InterPro" id="IPR007644">
    <property type="entry name" value="RNA_pol_bsu_protrusion"/>
</dbReference>
<dbReference type="InterPro" id="IPR007642">
    <property type="entry name" value="RNA_pol_Rpb2_2"/>
</dbReference>
<dbReference type="InterPro" id="IPR037034">
    <property type="entry name" value="RNA_pol_Rpb2_2_sf"/>
</dbReference>
<dbReference type="InterPro" id="IPR007645">
    <property type="entry name" value="RNA_pol_Rpb2_3"/>
</dbReference>
<dbReference type="InterPro" id="IPR007641">
    <property type="entry name" value="RNA_pol_Rpb2_7"/>
</dbReference>
<dbReference type="InterPro" id="IPR014724">
    <property type="entry name" value="RNA_pol_RPB2_OB-fold"/>
</dbReference>
<dbReference type="NCBIfam" id="NF001616">
    <property type="entry name" value="PRK00405.1"/>
    <property type="match status" value="1"/>
</dbReference>
<dbReference type="NCBIfam" id="TIGR02013">
    <property type="entry name" value="rpoB"/>
    <property type="match status" value="1"/>
</dbReference>
<dbReference type="PANTHER" id="PTHR20856">
    <property type="entry name" value="DNA-DIRECTED RNA POLYMERASE I SUBUNIT 2"/>
    <property type="match status" value="1"/>
</dbReference>
<dbReference type="Pfam" id="PF04563">
    <property type="entry name" value="RNA_pol_Rpb2_1"/>
    <property type="match status" value="1"/>
</dbReference>
<dbReference type="Pfam" id="PF04561">
    <property type="entry name" value="RNA_pol_Rpb2_2"/>
    <property type="match status" value="2"/>
</dbReference>
<dbReference type="Pfam" id="PF04565">
    <property type="entry name" value="RNA_pol_Rpb2_3"/>
    <property type="match status" value="1"/>
</dbReference>
<dbReference type="Pfam" id="PF10385">
    <property type="entry name" value="RNA_pol_Rpb2_45"/>
    <property type="match status" value="1"/>
</dbReference>
<dbReference type="Pfam" id="PF00562">
    <property type="entry name" value="RNA_pol_Rpb2_6"/>
    <property type="match status" value="1"/>
</dbReference>
<dbReference type="Pfam" id="PF04560">
    <property type="entry name" value="RNA_pol_Rpb2_7"/>
    <property type="match status" value="1"/>
</dbReference>
<dbReference type="SUPFAM" id="SSF64484">
    <property type="entry name" value="beta and beta-prime subunits of DNA dependent RNA-polymerase"/>
    <property type="match status" value="1"/>
</dbReference>
<dbReference type="PROSITE" id="PS01166">
    <property type="entry name" value="RNA_POL_BETA"/>
    <property type="match status" value="1"/>
</dbReference>
<reference key="1">
    <citation type="journal article" date="2005" name="J. Bacteriol.">
        <title>Insights on evolution of virulence and resistance from the complete genome analysis of an early methicillin-resistant Staphylococcus aureus strain and a biofilm-producing methicillin-resistant Staphylococcus epidermidis strain.</title>
        <authorList>
            <person name="Gill S.R."/>
            <person name="Fouts D.E."/>
            <person name="Archer G.L."/>
            <person name="Mongodin E.F."/>
            <person name="DeBoy R.T."/>
            <person name="Ravel J."/>
            <person name="Paulsen I.T."/>
            <person name="Kolonay J.F."/>
            <person name="Brinkac L.M."/>
            <person name="Beanan M.J."/>
            <person name="Dodson R.J."/>
            <person name="Daugherty S.C."/>
            <person name="Madupu R."/>
            <person name="Angiuoli S.V."/>
            <person name="Durkin A.S."/>
            <person name="Haft D.H."/>
            <person name="Vamathevan J.J."/>
            <person name="Khouri H."/>
            <person name="Utterback T.R."/>
            <person name="Lee C."/>
            <person name="Dimitrov G."/>
            <person name="Jiang L."/>
            <person name="Qin H."/>
            <person name="Weidman J."/>
            <person name="Tran K."/>
            <person name="Kang K.H."/>
            <person name="Hance I.R."/>
            <person name="Nelson K.E."/>
            <person name="Fraser C.M."/>
        </authorList>
    </citation>
    <scope>NUCLEOTIDE SEQUENCE [LARGE SCALE GENOMIC DNA]</scope>
    <source>
        <strain>ATCC 35984 / DSM 28319 / BCRC 17069 / CCUG 31568 / BM 3577 / RP62A</strain>
    </source>
</reference>
<proteinExistence type="inferred from homology"/>
<organism>
    <name type="scientific">Staphylococcus epidermidis (strain ATCC 35984 / DSM 28319 / BCRC 17069 / CCUG 31568 / BM 3577 / RP62A)</name>
    <dbReference type="NCBI Taxonomy" id="176279"/>
    <lineage>
        <taxon>Bacteria</taxon>
        <taxon>Bacillati</taxon>
        <taxon>Bacillota</taxon>
        <taxon>Bacilli</taxon>
        <taxon>Bacillales</taxon>
        <taxon>Staphylococcaceae</taxon>
        <taxon>Staphylococcus</taxon>
    </lineage>
</organism>
<name>RPOB_STAEQ</name>
<feature type="chain" id="PRO_0000047966" description="DNA-directed RNA polymerase subunit beta">
    <location>
        <begin position="1"/>
        <end position="1183"/>
    </location>
</feature>
<feature type="region of interest" description="Disordered" evidence="2">
    <location>
        <begin position="1151"/>
        <end position="1183"/>
    </location>
</feature>
<feature type="compositionally biased region" description="Acidic residues" evidence="2">
    <location>
        <begin position="1151"/>
        <end position="1162"/>
    </location>
</feature>
<comment type="function">
    <text evidence="1">DNA-dependent RNA polymerase catalyzes the transcription of DNA into RNA using the four ribonucleoside triphosphates as substrates.</text>
</comment>
<comment type="catalytic activity">
    <reaction evidence="1">
        <text>RNA(n) + a ribonucleoside 5'-triphosphate = RNA(n+1) + diphosphate</text>
        <dbReference type="Rhea" id="RHEA:21248"/>
        <dbReference type="Rhea" id="RHEA-COMP:14527"/>
        <dbReference type="Rhea" id="RHEA-COMP:17342"/>
        <dbReference type="ChEBI" id="CHEBI:33019"/>
        <dbReference type="ChEBI" id="CHEBI:61557"/>
        <dbReference type="ChEBI" id="CHEBI:140395"/>
        <dbReference type="EC" id="2.7.7.6"/>
    </reaction>
</comment>
<comment type="subunit">
    <text evidence="1">The RNAP catalytic core consists of 2 alpha, 1 beta, 1 beta' and 1 omega subunit. When a sigma factor is associated with the core the holoenzyme is formed, which can initiate transcription.</text>
</comment>
<comment type="similarity">
    <text evidence="1">Belongs to the RNA polymerase beta chain family.</text>
</comment>
<protein>
    <recommendedName>
        <fullName evidence="1">DNA-directed RNA polymerase subunit beta</fullName>
        <shortName evidence="1">RNAP subunit beta</shortName>
        <ecNumber evidence="1">2.7.7.6</ecNumber>
    </recommendedName>
    <alternativeName>
        <fullName evidence="1">RNA polymerase subunit beta</fullName>
    </alternativeName>
    <alternativeName>
        <fullName evidence="1">Transcriptase subunit beta</fullName>
    </alternativeName>
</protein>